<evidence type="ECO:0000250" key="1">
    <source>
        <dbReference type="UniProtKB" id="P00740"/>
    </source>
</evidence>
<evidence type="ECO:0000255" key="2"/>
<evidence type="ECO:0000255" key="3">
    <source>
        <dbReference type="PROSITE-ProRule" id="PRU00274"/>
    </source>
</evidence>
<protein>
    <recommendedName>
        <fullName>Coagulation factor IX</fullName>
        <ecNumber evidence="1">3.4.21.22</ecNumber>
    </recommendedName>
    <alternativeName>
        <fullName>Christmas factor</fullName>
    </alternativeName>
</protein>
<keyword id="KW-0094">Blood coagulation</keyword>
<keyword id="KW-0106">Calcium</keyword>
<keyword id="KW-1015">Disulfide bond</keyword>
<keyword id="KW-0325">Glycoprotein</keyword>
<keyword id="KW-0356">Hemostasis</keyword>
<keyword id="KW-0378">Hydrolase</keyword>
<keyword id="KW-0479">Metal-binding</keyword>
<keyword id="KW-0597">Phosphoprotein</keyword>
<keyword id="KW-0645">Protease</keyword>
<keyword id="KW-1185">Reference proteome</keyword>
<keyword id="KW-0964">Secreted</keyword>
<keyword id="KW-0720">Serine protease</keyword>
<keyword id="KW-0765">Sulfation</keyword>
<proteinExistence type="evidence at transcript level"/>
<accession>P16292</accession>
<sequence>GVSVSHASKKITRATTIFSNTEYENFTEAETIRGNVTQRSQSSDDFTRIVGGENAKPGQFPWQVLLNGKVEAFCGGSIINEKWVVTAAHCIKPDDNITVVAGEYNIQETENTEQKRNVIRIIPYHKYNATINKYNHDIALLELDKPLTLNSYVTPICIANREYTNIFLNFGSGYVSGWGRVFNRGRQASILQYLRVPFVDRATCLRSTKFTIYNNMFCAGFDVGGKDSCEGDSGGPHVTEVEGTSFLTGIISWGEECAIKGKYGVYTRVSWYVNW</sequence>
<organism>
    <name type="scientific">Oryctolagus cuniculus</name>
    <name type="common">Rabbit</name>
    <dbReference type="NCBI Taxonomy" id="9986"/>
    <lineage>
        <taxon>Eukaryota</taxon>
        <taxon>Metazoa</taxon>
        <taxon>Chordata</taxon>
        <taxon>Craniata</taxon>
        <taxon>Vertebrata</taxon>
        <taxon>Euteleostomi</taxon>
        <taxon>Mammalia</taxon>
        <taxon>Eutheria</taxon>
        <taxon>Euarchontoglires</taxon>
        <taxon>Glires</taxon>
        <taxon>Lagomorpha</taxon>
        <taxon>Leporidae</taxon>
        <taxon>Oryctolagus</taxon>
    </lineage>
</organism>
<feature type="chain" id="PRO_0000088684" description="Coagulation factor IX">
    <location>
        <begin position="1" status="less than"/>
        <end position="275" status="greater than"/>
    </location>
</feature>
<feature type="domain" description="Peptidase S1" evidence="3">
    <location>
        <begin position="49"/>
        <end position="275" status="greater than"/>
    </location>
</feature>
<feature type="active site" description="Charge relay system" evidence="1">
    <location>
        <position position="89"/>
    </location>
</feature>
<feature type="active site" description="Charge relay system" evidence="1">
    <location>
        <position position="137"/>
    </location>
</feature>
<feature type="active site" description="Charge relay system" evidence="1">
    <location>
        <position position="233"/>
    </location>
</feature>
<feature type="binding site" evidence="1">
    <location>
        <position position="103"/>
    </location>
    <ligand>
        <name>Ca(2+)</name>
        <dbReference type="ChEBI" id="CHEBI:29108"/>
    </ligand>
</feature>
<feature type="binding site" evidence="1">
    <location>
        <position position="105"/>
    </location>
    <ligand>
        <name>Ca(2+)</name>
        <dbReference type="ChEBI" id="CHEBI:29108"/>
    </ligand>
</feature>
<feature type="binding site" evidence="1">
    <location>
        <position position="108"/>
    </location>
    <ligand>
        <name>Ca(2+)</name>
        <dbReference type="ChEBI" id="CHEBI:29108"/>
    </ligand>
</feature>
<feature type="binding site" evidence="1">
    <location>
        <position position="110"/>
    </location>
    <ligand>
        <name>Ca(2+)</name>
        <dbReference type="ChEBI" id="CHEBI:29108"/>
    </ligand>
</feature>
<feature type="binding site" evidence="1">
    <location>
        <position position="113"/>
    </location>
    <ligand>
        <name>Ca(2+)</name>
        <dbReference type="ChEBI" id="CHEBI:29108"/>
    </ligand>
</feature>
<feature type="site" description="Cleavage; by factor XIa" evidence="1">
    <location>
        <begin position="13"/>
        <end position="14"/>
    </location>
</feature>
<feature type="site" description="Cleavage; by factor XIa" evidence="1">
    <location>
        <begin position="48"/>
        <end position="49"/>
    </location>
</feature>
<feature type="modified residue" description="Sulfotyrosine" evidence="1">
    <location>
        <position position="23"/>
    </location>
</feature>
<feature type="modified residue" description="Phosphothreonine" evidence="1">
    <location>
        <position position="27"/>
    </location>
</feature>
<feature type="glycosylation site" description="N-linked (GlcNAc...) asparagine" evidence="2">
    <location>
        <position position="25"/>
    </location>
</feature>
<feature type="glycosylation site" description="N-linked (GlcNAc...) asparagine" evidence="2">
    <location>
        <position position="35"/>
    </location>
</feature>
<feature type="glycosylation site" description="O-linked (GalNAc...) threonine" evidence="1">
    <location>
        <position position="47"/>
    </location>
</feature>
<feature type="glycosylation site" description="N-linked (GlcNAc...) asparagine" evidence="2">
    <location>
        <position position="96"/>
    </location>
</feature>
<feature type="glycosylation site" description="N-linked (GlcNAc...) asparagine" evidence="2">
    <location>
        <position position="128"/>
    </location>
</feature>
<feature type="disulfide bond" evidence="1">
    <location>
        <begin position="74"/>
        <end position="90"/>
    </location>
</feature>
<feature type="disulfide bond" evidence="1">
    <location>
        <begin position="204"/>
        <end position="218"/>
    </location>
</feature>
<feature type="disulfide bond" evidence="1">
    <location>
        <begin position="229"/>
        <end position="257"/>
    </location>
</feature>
<feature type="non-terminal residue">
    <location>
        <position position="1"/>
    </location>
</feature>
<feature type="non-terminal residue">
    <location>
        <position position="275"/>
    </location>
</feature>
<name>FA9_RABIT</name>
<dbReference type="EC" id="3.4.21.22" evidence="1"/>
<dbReference type="EMBL" id="M26234">
    <property type="protein sequence ID" value="AAA31251.1"/>
    <property type="molecule type" value="mRNA"/>
</dbReference>
<dbReference type="PIR" id="I46712">
    <property type="entry name" value="I46712"/>
</dbReference>
<dbReference type="SMR" id="P16292"/>
<dbReference type="STRING" id="9986.ENSOCUP00000004537"/>
<dbReference type="MEROPS" id="S01.214"/>
<dbReference type="GlyCosmos" id="P16292">
    <property type="glycosylation" value="5 sites, No reported glycans"/>
</dbReference>
<dbReference type="PaxDb" id="9986-ENSOCUP00000004537"/>
<dbReference type="eggNOG" id="ENOG502QUEV">
    <property type="taxonomic scope" value="Eukaryota"/>
</dbReference>
<dbReference type="InParanoid" id="P16292"/>
<dbReference type="Proteomes" id="UP000001811">
    <property type="component" value="Unplaced"/>
</dbReference>
<dbReference type="GO" id="GO:0005615">
    <property type="term" value="C:extracellular space"/>
    <property type="evidence" value="ECO:0000250"/>
    <property type="project" value="UniProtKB"/>
</dbReference>
<dbReference type="GO" id="GO:0005509">
    <property type="term" value="F:calcium ion binding"/>
    <property type="evidence" value="ECO:0000250"/>
    <property type="project" value="UniProtKB"/>
</dbReference>
<dbReference type="GO" id="GO:0004175">
    <property type="term" value="F:endopeptidase activity"/>
    <property type="evidence" value="ECO:0000250"/>
    <property type="project" value="UniProtKB"/>
</dbReference>
<dbReference type="GO" id="GO:0004252">
    <property type="term" value="F:serine-type endopeptidase activity"/>
    <property type="evidence" value="ECO:0007669"/>
    <property type="project" value="UniProtKB-EC"/>
</dbReference>
<dbReference type="GO" id="GO:0007596">
    <property type="term" value="P:blood coagulation"/>
    <property type="evidence" value="ECO:0000250"/>
    <property type="project" value="UniProtKB"/>
</dbReference>
<dbReference type="GO" id="GO:0006508">
    <property type="term" value="P:proteolysis"/>
    <property type="evidence" value="ECO:0000250"/>
    <property type="project" value="UniProtKB"/>
</dbReference>
<dbReference type="GO" id="GO:0031638">
    <property type="term" value="P:zymogen activation"/>
    <property type="evidence" value="ECO:0000250"/>
    <property type="project" value="UniProtKB"/>
</dbReference>
<dbReference type="CDD" id="cd00190">
    <property type="entry name" value="Tryp_SPc"/>
    <property type="match status" value="1"/>
</dbReference>
<dbReference type="FunFam" id="2.40.10.10:FF:000013">
    <property type="entry name" value="Coagulation factor X"/>
    <property type="match status" value="1"/>
</dbReference>
<dbReference type="Gene3D" id="2.40.10.10">
    <property type="entry name" value="Trypsin-like serine proteases"/>
    <property type="match status" value="2"/>
</dbReference>
<dbReference type="InterPro" id="IPR009003">
    <property type="entry name" value="Peptidase_S1_PA"/>
</dbReference>
<dbReference type="InterPro" id="IPR043504">
    <property type="entry name" value="Peptidase_S1_PA_chymotrypsin"/>
</dbReference>
<dbReference type="InterPro" id="IPR001314">
    <property type="entry name" value="Peptidase_S1A"/>
</dbReference>
<dbReference type="InterPro" id="IPR050127">
    <property type="entry name" value="Serine_Proteases_S1"/>
</dbReference>
<dbReference type="InterPro" id="IPR001254">
    <property type="entry name" value="Trypsin_dom"/>
</dbReference>
<dbReference type="InterPro" id="IPR018114">
    <property type="entry name" value="TRYPSIN_HIS"/>
</dbReference>
<dbReference type="InterPro" id="IPR033116">
    <property type="entry name" value="TRYPSIN_SER"/>
</dbReference>
<dbReference type="PANTHER" id="PTHR24264:SF65">
    <property type="entry name" value="SRCR DOMAIN-CONTAINING PROTEIN"/>
    <property type="match status" value="1"/>
</dbReference>
<dbReference type="PANTHER" id="PTHR24264">
    <property type="entry name" value="TRYPSIN-RELATED"/>
    <property type="match status" value="1"/>
</dbReference>
<dbReference type="Pfam" id="PF00089">
    <property type="entry name" value="Trypsin"/>
    <property type="match status" value="1"/>
</dbReference>
<dbReference type="PRINTS" id="PR00722">
    <property type="entry name" value="CHYMOTRYPSIN"/>
</dbReference>
<dbReference type="SMART" id="SM00020">
    <property type="entry name" value="Tryp_SPc"/>
    <property type="match status" value="1"/>
</dbReference>
<dbReference type="SUPFAM" id="SSF50494">
    <property type="entry name" value="Trypsin-like serine proteases"/>
    <property type="match status" value="1"/>
</dbReference>
<dbReference type="PROSITE" id="PS50240">
    <property type="entry name" value="TRYPSIN_DOM"/>
    <property type="match status" value="1"/>
</dbReference>
<dbReference type="PROSITE" id="PS00134">
    <property type="entry name" value="TRYPSIN_HIS"/>
    <property type="match status" value="1"/>
</dbReference>
<dbReference type="PROSITE" id="PS00135">
    <property type="entry name" value="TRYPSIN_SER"/>
    <property type="match status" value="1"/>
</dbReference>
<reference key="1">
    <citation type="journal article" date="1990" name="Genomics">
        <title>Direct sequencing of the activation peptide and the catalytic domain of the factor IX gene in six species.</title>
        <authorList>
            <person name="Sarkar G."/>
            <person name="Koeberl D.D."/>
            <person name="Sommer S.S."/>
        </authorList>
    </citation>
    <scope>NUCLEOTIDE SEQUENCE [MRNA]</scope>
</reference>
<gene>
    <name type="primary">F9</name>
</gene>
<comment type="function">
    <text evidence="1">Factor IX is a vitamin K-dependent plasma protein that participates in the intrinsic pathway of blood coagulation by converting factor X to its active form in the presence of Ca(2+) ions, phospholipids, and factor VIIIa.</text>
</comment>
<comment type="catalytic activity">
    <reaction evidence="1">
        <text>Selective cleavage of Arg-|-Ile bond in factor X to form factor Xa.</text>
        <dbReference type="EC" id="3.4.21.22"/>
    </reaction>
</comment>
<comment type="subunit">
    <text evidence="1">Heterodimer of a light chain and a heavy chain; disulfide-linked. Interacts (inactive and activated) with F11 (activated) in calcium-dependent manner. Interacts with SERPINC1.</text>
</comment>
<comment type="subcellular location">
    <subcellularLocation>
        <location evidence="1">Secreted</location>
    </subcellularLocation>
</comment>
<comment type="PTM">
    <text evidence="1">Activated by factor XIa, which excises the activation peptide. The propeptide can also be removed by snake venom protease (By similarity). Activated by coagulation factor VIIa-tissue factor (F7-F3) complex in calcium-dependent manner (By similarity).</text>
</comment>
<comment type="similarity">
    <text evidence="3">Belongs to the peptidase S1 family.</text>
</comment>